<evidence type="ECO:0000255" key="1">
    <source>
        <dbReference type="PROSITE-ProRule" id="PRU00134"/>
    </source>
</evidence>
<evidence type="ECO:0000305" key="2"/>
<organism>
    <name type="scientific">Caenorhabditis elegans</name>
    <dbReference type="NCBI Taxonomy" id="6239"/>
    <lineage>
        <taxon>Eukaryota</taxon>
        <taxon>Metazoa</taxon>
        <taxon>Ecdysozoa</taxon>
        <taxon>Nematoda</taxon>
        <taxon>Chromadorea</taxon>
        <taxon>Rhabditida</taxon>
        <taxon>Rhabditina</taxon>
        <taxon>Rhabditomorpha</taxon>
        <taxon>Rhabditoidea</taxon>
        <taxon>Rhabditidae</taxon>
        <taxon>Peloderinae</taxon>
        <taxon>Caenorhabditis</taxon>
    </lineage>
</organism>
<keyword id="KW-0238">DNA-binding</keyword>
<keyword id="KW-0479">Metal-binding</keyword>
<keyword id="KW-0539">Nucleus</keyword>
<keyword id="KW-1185">Reference proteome</keyword>
<keyword id="KW-0862">Zinc</keyword>
<keyword id="KW-0863">Zinc-finger</keyword>
<comment type="subcellular location">
    <subcellularLocation>
        <location evidence="2">Nucleus</location>
    </subcellularLocation>
</comment>
<proteinExistence type="predicted"/>
<sequence length="429" mass="48546">MNLPPDALHENVYAFALARDQVESYCNQCLTSMAELKKCSACRRLAYCSQECQRADWKLHKVECKAIKTHNEVANDSIRLVMRIAGKLSRNEDGEIEAYYIPGVARNFQNLEHHPSSYDADEESFVKEYFQFAIAPHPDRDLIKLIFQKVSINSFVVGNSTGNPIGVGLCIKLSAANHSCKPLTRVCYRNRTAMLVPVSSELPSTLEGACHSYIDELMPRDMRRDTLKKKYKFLCQCDGCLDEDRNARMEAWTCGICVKGWMRNKENGQCELCGWTMSKDHFELCRTAEEAGIAARSRLANDAIPLETKRNLCEKLLDLFQDTLHDHNVHRIPVLRCLYICSLAAQNITAAAKTGGTLLSIMLVYQNTTDPAILFQKYQLAQLFCAAGAKTQATKLLQEIEEPLEKIYTPDSMICRNVYCMILKARNLS</sequence>
<dbReference type="EMBL" id="Z46794">
    <property type="protein sequence ID" value="CAA86783.1"/>
    <property type="molecule type" value="Genomic_DNA"/>
</dbReference>
<dbReference type="PIR" id="T23984">
    <property type="entry name" value="T23984"/>
</dbReference>
<dbReference type="RefSeq" id="NP_496323.1">
    <property type="nucleotide sequence ID" value="NM_063922.7"/>
</dbReference>
<dbReference type="SMR" id="Q09415"/>
<dbReference type="BioGRID" id="39975">
    <property type="interactions" value="6"/>
</dbReference>
<dbReference type="DIP" id="DIP-24607N"/>
<dbReference type="FunCoup" id="Q09415">
    <property type="interactions" value="332"/>
</dbReference>
<dbReference type="IntAct" id="Q09415">
    <property type="interactions" value="1"/>
</dbReference>
<dbReference type="STRING" id="6239.R06F6.4.2"/>
<dbReference type="PaxDb" id="6239-R06F6.4"/>
<dbReference type="PeptideAtlas" id="Q09415"/>
<dbReference type="EnsemblMetazoa" id="R06F6.4.1">
    <property type="protein sequence ID" value="R06F6.4.1"/>
    <property type="gene ID" value="WBGene00011068"/>
</dbReference>
<dbReference type="GeneID" id="174662"/>
<dbReference type="KEGG" id="cel:CELE_R06F6.4"/>
<dbReference type="AGR" id="WB:WBGene00011068"/>
<dbReference type="CTD" id="174662"/>
<dbReference type="WormBase" id="R06F6.4">
    <property type="protein sequence ID" value="CE16303"/>
    <property type="gene ID" value="WBGene00011068"/>
    <property type="gene designation" value="set-14"/>
</dbReference>
<dbReference type="eggNOG" id="KOG2084">
    <property type="taxonomic scope" value="Eukaryota"/>
</dbReference>
<dbReference type="HOGENOM" id="CLU_631973_0_0_1"/>
<dbReference type="InParanoid" id="Q09415"/>
<dbReference type="OMA" id="CHSYIDE"/>
<dbReference type="OrthoDB" id="265717at2759"/>
<dbReference type="PhylomeDB" id="Q09415"/>
<dbReference type="Reactome" id="R-CEL-3214841">
    <property type="pathway name" value="PKMTs methylate histone lysines"/>
</dbReference>
<dbReference type="PRO" id="PR:Q09415"/>
<dbReference type="Proteomes" id="UP000001940">
    <property type="component" value="Chromosome II"/>
</dbReference>
<dbReference type="Bgee" id="WBGene00011068">
    <property type="expression patterns" value="Expressed in germ line (C elegans) and 8 other cell types or tissues"/>
</dbReference>
<dbReference type="GO" id="GO:0005634">
    <property type="term" value="C:nucleus"/>
    <property type="evidence" value="ECO:0000318"/>
    <property type="project" value="GO_Central"/>
</dbReference>
<dbReference type="GO" id="GO:0003677">
    <property type="term" value="F:DNA binding"/>
    <property type="evidence" value="ECO:0007669"/>
    <property type="project" value="UniProtKB-KW"/>
</dbReference>
<dbReference type="GO" id="GO:0008270">
    <property type="term" value="F:zinc ion binding"/>
    <property type="evidence" value="ECO:0007669"/>
    <property type="project" value="UniProtKB-KW"/>
</dbReference>
<dbReference type="Gene3D" id="6.10.140.2220">
    <property type="match status" value="1"/>
</dbReference>
<dbReference type="Gene3D" id="2.170.270.10">
    <property type="entry name" value="SET domain"/>
    <property type="match status" value="1"/>
</dbReference>
<dbReference type="Gene3D" id="1.25.40.10">
    <property type="entry name" value="Tetratricopeptide repeat domain"/>
    <property type="match status" value="1"/>
</dbReference>
<dbReference type="InterPro" id="IPR050869">
    <property type="entry name" value="H3K4_H4K5_MeTrfase"/>
</dbReference>
<dbReference type="InterPro" id="IPR046341">
    <property type="entry name" value="SET_dom_sf"/>
</dbReference>
<dbReference type="InterPro" id="IPR011990">
    <property type="entry name" value="TPR-like_helical_dom_sf"/>
</dbReference>
<dbReference type="InterPro" id="IPR002893">
    <property type="entry name" value="Znf_MYND"/>
</dbReference>
<dbReference type="PANTHER" id="PTHR12197:SF251">
    <property type="entry name" value="EG:BACR7C10.4 PROTEIN"/>
    <property type="match status" value="1"/>
</dbReference>
<dbReference type="PANTHER" id="PTHR12197">
    <property type="entry name" value="HISTONE-LYSINE N-METHYLTRANSFERASE SMYD"/>
    <property type="match status" value="1"/>
</dbReference>
<dbReference type="Pfam" id="PF01753">
    <property type="entry name" value="zf-MYND"/>
    <property type="match status" value="1"/>
</dbReference>
<dbReference type="SUPFAM" id="SSF144232">
    <property type="entry name" value="HIT/MYND zinc finger-like"/>
    <property type="match status" value="1"/>
</dbReference>
<dbReference type="SUPFAM" id="SSF82199">
    <property type="entry name" value="SET domain"/>
    <property type="match status" value="1"/>
</dbReference>
<dbReference type="PROSITE" id="PS01360">
    <property type="entry name" value="ZF_MYND_1"/>
    <property type="match status" value="1"/>
</dbReference>
<dbReference type="PROSITE" id="PS50865">
    <property type="entry name" value="ZF_MYND_2"/>
    <property type="match status" value="1"/>
</dbReference>
<protein>
    <recommendedName>
        <fullName>SET domain-containing protein 14</fullName>
    </recommendedName>
</protein>
<accession>Q09415</accession>
<accession>Q09414</accession>
<feature type="chain" id="PRO_0000218322" description="SET domain-containing protein 14">
    <location>
        <begin position="1"/>
        <end position="429"/>
    </location>
</feature>
<feature type="zinc finger region" description="MYND-type" evidence="1">
    <location>
        <begin position="26"/>
        <end position="64"/>
    </location>
</feature>
<feature type="binding site" evidence="1">
    <location>
        <position position="26"/>
    </location>
    <ligand>
        <name>Zn(2+)</name>
        <dbReference type="ChEBI" id="CHEBI:29105"/>
        <label>1</label>
    </ligand>
</feature>
<feature type="binding site" evidence="1">
    <location>
        <position position="29"/>
    </location>
    <ligand>
        <name>Zn(2+)</name>
        <dbReference type="ChEBI" id="CHEBI:29105"/>
        <label>1</label>
    </ligand>
</feature>
<feature type="binding site" evidence="1">
    <location>
        <position position="39"/>
    </location>
    <ligand>
        <name>Zn(2+)</name>
        <dbReference type="ChEBI" id="CHEBI:29105"/>
        <label>2</label>
    </ligand>
</feature>
<feature type="binding site" evidence="1">
    <location>
        <position position="42"/>
    </location>
    <ligand>
        <name>Zn(2+)</name>
        <dbReference type="ChEBI" id="CHEBI:29105"/>
        <label>2</label>
    </ligand>
</feature>
<feature type="binding site" evidence="1">
    <location>
        <position position="48"/>
    </location>
    <ligand>
        <name>Zn(2+)</name>
        <dbReference type="ChEBI" id="CHEBI:29105"/>
        <label>1</label>
    </ligand>
</feature>
<feature type="binding site" evidence="1">
    <location>
        <position position="52"/>
    </location>
    <ligand>
        <name>Zn(2+)</name>
        <dbReference type="ChEBI" id="CHEBI:29105"/>
        <label>1</label>
    </ligand>
</feature>
<feature type="binding site" evidence="1">
    <location>
        <position position="60"/>
    </location>
    <ligand>
        <name>Zn(2+)</name>
        <dbReference type="ChEBI" id="CHEBI:29105"/>
        <label>2</label>
    </ligand>
</feature>
<feature type="binding site" evidence="1">
    <location>
        <position position="64"/>
    </location>
    <ligand>
        <name>Zn(2+)</name>
        <dbReference type="ChEBI" id="CHEBI:29105"/>
        <label>2</label>
    </ligand>
</feature>
<name>SET14_CAEEL</name>
<reference key="1">
    <citation type="journal article" date="1998" name="Science">
        <title>Genome sequence of the nematode C. elegans: a platform for investigating biology.</title>
        <authorList>
            <consortium name="The C. elegans sequencing consortium"/>
        </authorList>
    </citation>
    <scope>NUCLEOTIDE SEQUENCE [LARGE SCALE GENOMIC DNA]</scope>
    <source>
        <strain>Bristol N2</strain>
    </source>
</reference>
<gene>
    <name type="primary">set-14</name>
    <name type="ORF">R06F6.4</name>
</gene>